<dbReference type="EMBL" id="U81827">
    <property type="protein sequence ID" value="AAD00525.1"/>
    <property type="molecule type" value="mRNA"/>
</dbReference>
<dbReference type="EMBL" id="AF499001">
    <property type="protein sequence ID" value="AAO41062.1"/>
    <property type="molecule type" value="Genomic_DNA"/>
</dbReference>
<dbReference type="EMBL" id="AACD01000007">
    <property type="protein sequence ID" value="EAA66519.1"/>
    <property type="status" value="ALT_SEQ"/>
    <property type="molecule type" value="Genomic_DNA"/>
</dbReference>
<dbReference type="EMBL" id="BN001308">
    <property type="protein sequence ID" value="CBF89522.1"/>
    <property type="molecule type" value="Genomic_DNA"/>
</dbReference>
<dbReference type="RefSeq" id="XP_050469229.1">
    <property type="nucleotide sequence ID" value="XM_050613411.1"/>
</dbReference>
<dbReference type="RefSeq" id="XP_658024.1">
    <property type="nucleotide sequence ID" value="XM_652932.1"/>
</dbReference>
<dbReference type="SMR" id="O94111"/>
<dbReference type="FunCoup" id="O94111">
    <property type="interactions" value="653"/>
</dbReference>
<dbReference type="STRING" id="227321.O94111"/>
<dbReference type="EnsemblFungi" id="CBF89522">
    <property type="protein sequence ID" value="CBF89522"/>
    <property type="gene ID" value="ANIA_00420"/>
</dbReference>
<dbReference type="GeneID" id="2876196"/>
<dbReference type="VEuPathDB" id="FungiDB:AN0420"/>
<dbReference type="eggNOG" id="KOG3430">
    <property type="taxonomic scope" value="Eukaryota"/>
</dbReference>
<dbReference type="HOGENOM" id="CLU_2183916_0_0_1"/>
<dbReference type="InParanoid" id="O94111"/>
<dbReference type="OMA" id="THEKGHF"/>
<dbReference type="OrthoDB" id="10033309at2759"/>
<dbReference type="Proteomes" id="UP000000560">
    <property type="component" value="Chromosome VIII"/>
</dbReference>
<dbReference type="GO" id="GO:0005868">
    <property type="term" value="C:cytoplasmic dynein complex"/>
    <property type="evidence" value="ECO:0000314"/>
    <property type="project" value="AspGD"/>
</dbReference>
<dbReference type="GO" id="GO:0005881">
    <property type="term" value="C:cytoplasmic microtubule"/>
    <property type="evidence" value="ECO:0007669"/>
    <property type="project" value="EnsemblFungi"/>
</dbReference>
<dbReference type="GO" id="GO:0035974">
    <property type="term" value="C:meiotic spindle pole body"/>
    <property type="evidence" value="ECO:0007669"/>
    <property type="project" value="EnsemblFungi"/>
</dbReference>
<dbReference type="GO" id="GO:0034399">
    <property type="term" value="C:nuclear periphery"/>
    <property type="evidence" value="ECO:0007669"/>
    <property type="project" value="EnsemblFungi"/>
</dbReference>
<dbReference type="GO" id="GO:0005643">
    <property type="term" value="C:nuclear pore"/>
    <property type="evidence" value="ECO:0007669"/>
    <property type="project" value="UniProtKB-SubCell"/>
</dbReference>
<dbReference type="GO" id="GO:1990429">
    <property type="term" value="C:peroxisomal importomer complex"/>
    <property type="evidence" value="ECO:0007669"/>
    <property type="project" value="EnsemblFungi"/>
</dbReference>
<dbReference type="GO" id="GO:0045505">
    <property type="term" value="F:dynein intermediate chain binding"/>
    <property type="evidence" value="ECO:0000318"/>
    <property type="project" value="GO_Central"/>
</dbReference>
<dbReference type="GO" id="GO:0008574">
    <property type="term" value="F:plus-end-directed microtubule motor activity"/>
    <property type="evidence" value="ECO:0007669"/>
    <property type="project" value="EnsemblFungi"/>
</dbReference>
<dbReference type="GO" id="GO:0048315">
    <property type="term" value="P:conidium formation"/>
    <property type="evidence" value="ECO:0000315"/>
    <property type="project" value="AspGD"/>
</dbReference>
<dbReference type="GO" id="GO:0040001">
    <property type="term" value="P:establishment of mitotic spindle localization"/>
    <property type="evidence" value="ECO:0007669"/>
    <property type="project" value="EnsemblFungi"/>
</dbReference>
<dbReference type="GO" id="GO:0051028">
    <property type="term" value="P:mRNA transport"/>
    <property type="evidence" value="ECO:0007669"/>
    <property type="project" value="UniProtKB-KW"/>
</dbReference>
<dbReference type="GO" id="GO:0030473">
    <property type="term" value="P:nuclear migration along microtubule"/>
    <property type="evidence" value="ECO:0000315"/>
    <property type="project" value="AspGD"/>
</dbReference>
<dbReference type="GO" id="GO:0051292">
    <property type="term" value="P:nuclear pore complex assembly"/>
    <property type="evidence" value="ECO:0007669"/>
    <property type="project" value="EnsemblFungi"/>
</dbReference>
<dbReference type="GO" id="GO:0015031">
    <property type="term" value="P:protein transport"/>
    <property type="evidence" value="ECO:0007669"/>
    <property type="project" value="UniProtKB-KW"/>
</dbReference>
<dbReference type="GO" id="GO:0043935">
    <property type="term" value="P:sexual sporulation resulting in formation of a cellular spore"/>
    <property type="evidence" value="ECO:0000315"/>
    <property type="project" value="AspGD"/>
</dbReference>
<dbReference type="CDD" id="cd21452">
    <property type="entry name" value="DLC-like_DYNLL1_DYNLL2"/>
    <property type="match status" value="1"/>
</dbReference>
<dbReference type="FunFam" id="3.30.740.10:FF:000001">
    <property type="entry name" value="Dynein light chain"/>
    <property type="match status" value="1"/>
</dbReference>
<dbReference type="Gene3D" id="3.30.740.10">
    <property type="entry name" value="Protein Inhibitor Of Neuronal Nitric Oxide Synthase"/>
    <property type="match status" value="1"/>
</dbReference>
<dbReference type="InterPro" id="IPR037177">
    <property type="entry name" value="DLC_sf"/>
</dbReference>
<dbReference type="InterPro" id="IPR019763">
    <property type="entry name" value="Dynein_light_1/2_CS"/>
</dbReference>
<dbReference type="InterPro" id="IPR001372">
    <property type="entry name" value="Dynein_light_chain_typ-1/2"/>
</dbReference>
<dbReference type="PANTHER" id="PTHR11886">
    <property type="entry name" value="DYNEIN LIGHT CHAIN"/>
    <property type="match status" value="1"/>
</dbReference>
<dbReference type="PANTHER" id="PTHR11886:SF35">
    <property type="entry name" value="DYNEIN LIGHT CHAIN"/>
    <property type="match status" value="1"/>
</dbReference>
<dbReference type="Pfam" id="PF01221">
    <property type="entry name" value="Dynein_light"/>
    <property type="match status" value="1"/>
</dbReference>
<dbReference type="SMART" id="SM01375">
    <property type="entry name" value="Dynein_light"/>
    <property type="match status" value="1"/>
</dbReference>
<dbReference type="SUPFAM" id="SSF54648">
    <property type="entry name" value="DLC"/>
    <property type="match status" value="1"/>
</dbReference>
<dbReference type="PROSITE" id="PS01239">
    <property type="entry name" value="DYNEIN_LIGHT_1"/>
    <property type="match status" value="1"/>
</dbReference>
<keyword id="KW-0963">Cytoplasm</keyword>
<keyword id="KW-0206">Cytoskeleton</keyword>
<keyword id="KW-0243">Dynein</keyword>
<keyword id="KW-0493">Microtubule</keyword>
<keyword id="KW-0505">Motor protein</keyword>
<keyword id="KW-0509">mRNA transport</keyword>
<keyword id="KW-0906">Nuclear pore complex</keyword>
<keyword id="KW-0539">Nucleus</keyword>
<keyword id="KW-0653">Protein transport</keyword>
<keyword id="KW-1185">Reference proteome</keyword>
<keyword id="KW-0811">Translocation</keyword>
<keyword id="KW-0813">Transport</keyword>
<feature type="chain" id="PRO_0000195146" description="Dynein light chain, cytoplasmic">
    <location>
        <begin position="1"/>
        <end position="94"/>
    </location>
</feature>
<organism>
    <name type="scientific">Emericella nidulans (strain FGSC A4 / ATCC 38163 / CBS 112.46 / NRRL 194 / M139)</name>
    <name type="common">Aspergillus nidulans</name>
    <dbReference type="NCBI Taxonomy" id="227321"/>
    <lineage>
        <taxon>Eukaryota</taxon>
        <taxon>Fungi</taxon>
        <taxon>Dikarya</taxon>
        <taxon>Ascomycota</taxon>
        <taxon>Pezizomycotina</taxon>
        <taxon>Eurotiomycetes</taxon>
        <taxon>Eurotiomycetidae</taxon>
        <taxon>Eurotiales</taxon>
        <taxon>Aspergillaceae</taxon>
        <taxon>Aspergillus</taxon>
        <taxon>Aspergillus subgen. Nidulantes</taxon>
    </lineage>
</organism>
<sequence length="94" mass="11031">MASEKKDKLEPQIKSVDMSEDMQQEAVEVAIEAMEKYHIEKDIAQYIKREFDSRKGATWHCVVGRNFGSFVTHETKHFIYFYLGHCAILLFKTQ</sequence>
<protein>
    <recommendedName>
        <fullName>Dynein light chain, cytoplasmic</fullName>
    </recommendedName>
    <alternativeName>
        <fullName>8 kDa cytoplasmic dynein light chain</fullName>
    </alternativeName>
</protein>
<name>DYL1_EMENI</name>
<proteinExistence type="inferred from homology"/>
<evidence type="ECO:0000250" key="1"/>
<evidence type="ECO:0000250" key="2">
    <source>
        <dbReference type="UniProtKB" id="Q02647"/>
    </source>
</evidence>
<evidence type="ECO:0000305" key="3"/>
<gene>
    <name type="primary">nudG</name>
    <name type="ORF">AN0420</name>
</gene>
<reference key="1">
    <citation type="submission" date="1996-12" db="EMBL/GenBank/DDBJ databases">
        <title>Requirement of 8K dynein light chain in cellular localization of dynein heavy chain and nuclear migration.</title>
        <authorList>
            <person name="Beckwith S.M."/>
            <person name="Roghi C.H."/>
            <person name="Liu B."/>
            <person name="Morris N.R."/>
        </authorList>
    </citation>
    <scope>NUCLEOTIDE SEQUENCE [MRNA]</scope>
</reference>
<reference key="2">
    <citation type="journal article" date="2003" name="Mol. Microbiol.">
        <title>The requirement of the LC8 dynein light chain for nuclear migration and septum positioning is temperature dependent in Aspergillus nidulans.</title>
        <authorList>
            <person name="Liu B."/>
            <person name="Xiang X."/>
            <person name="Lee Y.R."/>
        </authorList>
    </citation>
    <scope>NUCLEOTIDE SEQUENCE [GENOMIC DNA]</scope>
</reference>
<reference key="3">
    <citation type="journal article" date="2005" name="Nature">
        <title>Sequencing of Aspergillus nidulans and comparative analysis with A. fumigatus and A. oryzae.</title>
        <authorList>
            <person name="Galagan J.E."/>
            <person name="Calvo S.E."/>
            <person name="Cuomo C."/>
            <person name="Ma L.-J."/>
            <person name="Wortman J.R."/>
            <person name="Batzoglou S."/>
            <person name="Lee S.-I."/>
            <person name="Bastuerkmen M."/>
            <person name="Spevak C.C."/>
            <person name="Clutterbuck J."/>
            <person name="Kapitonov V."/>
            <person name="Jurka J."/>
            <person name="Scazzocchio C."/>
            <person name="Farman M.L."/>
            <person name="Butler J."/>
            <person name="Purcell S."/>
            <person name="Harris S."/>
            <person name="Braus G.H."/>
            <person name="Draht O."/>
            <person name="Busch S."/>
            <person name="D'Enfert C."/>
            <person name="Bouchier C."/>
            <person name="Goldman G.H."/>
            <person name="Bell-Pedersen D."/>
            <person name="Griffiths-Jones S."/>
            <person name="Doonan J.H."/>
            <person name="Yu J."/>
            <person name="Vienken K."/>
            <person name="Pain A."/>
            <person name="Freitag M."/>
            <person name="Selker E.U."/>
            <person name="Archer D.B."/>
            <person name="Penalva M.A."/>
            <person name="Oakley B.R."/>
            <person name="Momany M."/>
            <person name="Tanaka T."/>
            <person name="Kumagai T."/>
            <person name="Asai K."/>
            <person name="Machida M."/>
            <person name="Nierman W.C."/>
            <person name="Denning D.W."/>
            <person name="Caddick M.X."/>
            <person name="Hynes M."/>
            <person name="Paoletti M."/>
            <person name="Fischer R."/>
            <person name="Miller B.L."/>
            <person name="Dyer P.S."/>
            <person name="Sachs M.S."/>
            <person name="Osmani S.A."/>
            <person name="Birren B.W."/>
        </authorList>
    </citation>
    <scope>NUCLEOTIDE SEQUENCE [LARGE SCALE GENOMIC DNA]</scope>
    <source>
        <strain>FGSC A4 / ATCC 38163 / CBS 112.46 / NRRL 194 / M139</strain>
    </source>
</reference>
<reference key="4">
    <citation type="journal article" date="2009" name="Fungal Genet. Biol.">
        <title>The 2008 update of the Aspergillus nidulans genome annotation: a community effort.</title>
        <authorList>
            <person name="Wortman J.R."/>
            <person name="Gilsenan J.M."/>
            <person name="Joardar V."/>
            <person name="Deegan J."/>
            <person name="Clutterbuck J."/>
            <person name="Andersen M.R."/>
            <person name="Archer D."/>
            <person name="Bencina M."/>
            <person name="Braus G."/>
            <person name="Coutinho P."/>
            <person name="von Dohren H."/>
            <person name="Doonan J."/>
            <person name="Driessen A.J."/>
            <person name="Durek P."/>
            <person name="Espeso E."/>
            <person name="Fekete E."/>
            <person name="Flipphi M."/>
            <person name="Estrada C.G."/>
            <person name="Geysens S."/>
            <person name="Goldman G."/>
            <person name="de Groot P.W."/>
            <person name="Hansen K."/>
            <person name="Harris S.D."/>
            <person name="Heinekamp T."/>
            <person name="Helmstaedt K."/>
            <person name="Henrissat B."/>
            <person name="Hofmann G."/>
            <person name="Homan T."/>
            <person name="Horio T."/>
            <person name="Horiuchi H."/>
            <person name="James S."/>
            <person name="Jones M."/>
            <person name="Karaffa L."/>
            <person name="Karanyi Z."/>
            <person name="Kato M."/>
            <person name="Keller N."/>
            <person name="Kelly D.E."/>
            <person name="Kiel J.A."/>
            <person name="Kim J.M."/>
            <person name="van der Klei I.J."/>
            <person name="Klis F.M."/>
            <person name="Kovalchuk A."/>
            <person name="Krasevec N."/>
            <person name="Kubicek C.P."/>
            <person name="Liu B."/>
            <person name="Maccabe A."/>
            <person name="Meyer V."/>
            <person name="Mirabito P."/>
            <person name="Miskei M."/>
            <person name="Mos M."/>
            <person name="Mullins J."/>
            <person name="Nelson D.R."/>
            <person name="Nielsen J."/>
            <person name="Oakley B.R."/>
            <person name="Osmani S.A."/>
            <person name="Pakula T."/>
            <person name="Paszewski A."/>
            <person name="Paulsen I."/>
            <person name="Pilsyk S."/>
            <person name="Pocsi I."/>
            <person name="Punt P.J."/>
            <person name="Ram A.F."/>
            <person name="Ren Q."/>
            <person name="Robellet X."/>
            <person name="Robson G."/>
            <person name="Seiboth B."/>
            <person name="van Solingen P."/>
            <person name="Specht T."/>
            <person name="Sun J."/>
            <person name="Taheri-Talesh N."/>
            <person name="Takeshita N."/>
            <person name="Ussery D."/>
            <person name="vanKuyk P.A."/>
            <person name="Visser H."/>
            <person name="van de Vondervoort P.J."/>
            <person name="de Vries R.P."/>
            <person name="Walton J."/>
            <person name="Xiang X."/>
            <person name="Xiong Y."/>
            <person name="Zeng A.P."/>
            <person name="Brandt B.W."/>
            <person name="Cornell M.J."/>
            <person name="van den Hondel C.A."/>
            <person name="Visser J."/>
            <person name="Oliver S.G."/>
            <person name="Turner G."/>
        </authorList>
    </citation>
    <scope>GENOME REANNOTATION</scope>
    <source>
        <strain>FGSC A4 / ATCC 38163 / CBS 112.46 / NRRL 194 / M139</strain>
    </source>
</reference>
<accession>O94111</accession>
<accession>C8VTG5</accession>
<accession>Q547D6</accession>
<accession>Q5BGB0</accession>
<comment type="function">
    <text evidence="1 2">Acts as one of several non-catalytic accessory components of the cytoplasmic dynein complex that are thought to be involved in linking dynein to cargos and to adapter proteins that regulate dynein function. Cytoplasmic dynein 1 acts as a motor for the intracellular retrograde motility of vesicles and organelles along microtubules. May play a role in changing or maintaining the spatial distribution of cytoskeletal structures (By similarity). Also a component of the nuclear pore complex (By similarity).</text>
</comment>
<comment type="subunit">
    <text evidence="2">Homodimer. Cytoplasmic dynein consists of two catalytic heavy chains (HCs) and a number of non-catalytic subunits which present intermediate chains (ICs), light intermediate chains (LICs) and light chains (LCs). Component of the nuclear pore complex (NPC). The nuclear pore complex constitutes the exclusive means of nucleocytoplasmic transport. NPCs allow the passive diffusion of ions and small molecules and the active, nuclear transport receptor-mediated bidirectional transport of macromolecules such as proteins, RNAs, ribonucleoparticles (RNPs), and ribosomal subunits across the nuclear envelope. Due to its 8-fold rotational symmetry, all subunits are present with 8 copies or multiples thereof.</text>
</comment>
<comment type="subcellular location">
    <subcellularLocation>
        <location evidence="2">Cytoplasm</location>
        <location evidence="2">Cytoskeleton</location>
    </subcellularLocation>
    <subcellularLocation>
        <location evidence="2">Nucleus</location>
        <location evidence="2">Nuclear pore complex</location>
    </subcellularLocation>
</comment>
<comment type="similarity">
    <text evidence="3">Belongs to the dynein light chain family.</text>
</comment>
<comment type="sequence caution" evidence="3">
    <conflict type="erroneous gene model prediction">
        <sequence resource="EMBL-CDS" id="EAA66519"/>
    </conflict>
</comment>